<name>ACPS_RICFE</name>
<accession>Q4UKX9</accession>
<dbReference type="EC" id="2.7.8.7" evidence="1"/>
<dbReference type="EMBL" id="CP000053">
    <property type="protein sequence ID" value="AAY61794.1"/>
    <property type="molecule type" value="Genomic_DNA"/>
</dbReference>
<dbReference type="SMR" id="Q4UKX9"/>
<dbReference type="STRING" id="315456.RF_0943"/>
<dbReference type="KEGG" id="rfe:RF_0943"/>
<dbReference type="eggNOG" id="COG0736">
    <property type="taxonomic scope" value="Bacteria"/>
</dbReference>
<dbReference type="HOGENOM" id="CLU_089696_3_1_5"/>
<dbReference type="OrthoDB" id="517356at2"/>
<dbReference type="Proteomes" id="UP000008548">
    <property type="component" value="Chromosome"/>
</dbReference>
<dbReference type="GO" id="GO:0005737">
    <property type="term" value="C:cytoplasm"/>
    <property type="evidence" value="ECO:0007669"/>
    <property type="project" value="UniProtKB-SubCell"/>
</dbReference>
<dbReference type="GO" id="GO:0008897">
    <property type="term" value="F:holo-[acyl-carrier-protein] synthase activity"/>
    <property type="evidence" value="ECO:0007669"/>
    <property type="project" value="UniProtKB-UniRule"/>
</dbReference>
<dbReference type="GO" id="GO:0000287">
    <property type="term" value="F:magnesium ion binding"/>
    <property type="evidence" value="ECO:0007669"/>
    <property type="project" value="UniProtKB-UniRule"/>
</dbReference>
<dbReference type="GO" id="GO:0006633">
    <property type="term" value="P:fatty acid biosynthetic process"/>
    <property type="evidence" value="ECO:0007669"/>
    <property type="project" value="UniProtKB-UniRule"/>
</dbReference>
<dbReference type="Gene3D" id="3.90.470.20">
    <property type="entry name" value="4'-phosphopantetheinyl transferase domain"/>
    <property type="match status" value="1"/>
</dbReference>
<dbReference type="HAMAP" id="MF_00101">
    <property type="entry name" value="AcpS"/>
    <property type="match status" value="1"/>
</dbReference>
<dbReference type="InterPro" id="IPR008278">
    <property type="entry name" value="4-PPantetheinyl_Trfase_dom"/>
</dbReference>
<dbReference type="InterPro" id="IPR037143">
    <property type="entry name" value="4-PPantetheinyl_Trfase_dom_sf"/>
</dbReference>
<dbReference type="InterPro" id="IPR002582">
    <property type="entry name" value="ACPS"/>
</dbReference>
<dbReference type="InterPro" id="IPR004568">
    <property type="entry name" value="Ppantetheine-prot_Trfase_dom"/>
</dbReference>
<dbReference type="NCBIfam" id="TIGR00516">
    <property type="entry name" value="acpS"/>
    <property type="match status" value="1"/>
</dbReference>
<dbReference type="NCBIfam" id="TIGR00556">
    <property type="entry name" value="pantethn_trn"/>
    <property type="match status" value="1"/>
</dbReference>
<dbReference type="Pfam" id="PF01648">
    <property type="entry name" value="ACPS"/>
    <property type="match status" value="1"/>
</dbReference>
<dbReference type="SUPFAM" id="SSF56214">
    <property type="entry name" value="4'-phosphopantetheinyl transferase"/>
    <property type="match status" value="1"/>
</dbReference>
<feature type="chain" id="PRO_0000228300" description="Holo-[acyl-carrier-protein] synthase">
    <location>
        <begin position="1"/>
        <end position="131"/>
    </location>
</feature>
<feature type="binding site" evidence="1">
    <location>
        <position position="8"/>
    </location>
    <ligand>
        <name>Mg(2+)</name>
        <dbReference type="ChEBI" id="CHEBI:18420"/>
    </ligand>
</feature>
<feature type="binding site" evidence="1">
    <location>
        <position position="59"/>
    </location>
    <ligand>
        <name>Mg(2+)</name>
        <dbReference type="ChEBI" id="CHEBI:18420"/>
    </ligand>
</feature>
<keyword id="KW-0963">Cytoplasm</keyword>
<keyword id="KW-0275">Fatty acid biosynthesis</keyword>
<keyword id="KW-0276">Fatty acid metabolism</keyword>
<keyword id="KW-0444">Lipid biosynthesis</keyword>
<keyword id="KW-0443">Lipid metabolism</keyword>
<keyword id="KW-0460">Magnesium</keyword>
<keyword id="KW-0479">Metal-binding</keyword>
<keyword id="KW-0808">Transferase</keyword>
<protein>
    <recommendedName>
        <fullName evidence="1">Holo-[acyl-carrier-protein] synthase</fullName>
        <shortName evidence="1">Holo-ACP synthase</shortName>
        <ecNumber evidence="1">2.7.8.7</ecNumber>
    </recommendedName>
    <alternativeName>
        <fullName evidence="1">4'-phosphopantetheinyl transferase AcpS</fullName>
    </alternativeName>
</protein>
<organism>
    <name type="scientific">Rickettsia felis (strain ATCC VR-1525 / URRWXCal2)</name>
    <name type="common">Rickettsia azadi</name>
    <dbReference type="NCBI Taxonomy" id="315456"/>
    <lineage>
        <taxon>Bacteria</taxon>
        <taxon>Pseudomonadati</taxon>
        <taxon>Pseudomonadota</taxon>
        <taxon>Alphaproteobacteria</taxon>
        <taxon>Rickettsiales</taxon>
        <taxon>Rickettsiaceae</taxon>
        <taxon>Rickettsieae</taxon>
        <taxon>Rickettsia</taxon>
        <taxon>spotted fever group</taxon>
    </lineage>
</organism>
<comment type="function">
    <text evidence="1">Transfers the 4'-phosphopantetheine moiety from coenzyme A to a Ser of acyl-carrier-protein.</text>
</comment>
<comment type="catalytic activity">
    <reaction evidence="1">
        <text>apo-[ACP] + CoA = holo-[ACP] + adenosine 3',5'-bisphosphate + H(+)</text>
        <dbReference type="Rhea" id="RHEA:12068"/>
        <dbReference type="Rhea" id="RHEA-COMP:9685"/>
        <dbReference type="Rhea" id="RHEA-COMP:9690"/>
        <dbReference type="ChEBI" id="CHEBI:15378"/>
        <dbReference type="ChEBI" id="CHEBI:29999"/>
        <dbReference type="ChEBI" id="CHEBI:57287"/>
        <dbReference type="ChEBI" id="CHEBI:58343"/>
        <dbReference type="ChEBI" id="CHEBI:64479"/>
        <dbReference type="EC" id="2.7.8.7"/>
    </reaction>
</comment>
<comment type="cofactor">
    <cofactor evidence="1">
        <name>Mg(2+)</name>
        <dbReference type="ChEBI" id="CHEBI:18420"/>
    </cofactor>
</comment>
<comment type="subcellular location">
    <subcellularLocation>
        <location evidence="1">Cytoplasm</location>
    </subcellularLocation>
</comment>
<comment type="similarity">
    <text evidence="1">Belongs to the P-Pant transferase superfamily. AcpS family.</text>
</comment>
<reference key="1">
    <citation type="journal article" date="2005" name="PLoS Biol.">
        <title>The genome sequence of Rickettsia felis identifies the first putative conjugative plasmid in an obligate intracellular parasite.</title>
        <authorList>
            <person name="Ogata H."/>
            <person name="Renesto P."/>
            <person name="Audic S."/>
            <person name="Robert C."/>
            <person name="Blanc G."/>
            <person name="Fournier P.-E."/>
            <person name="Parinello H."/>
            <person name="Claverie J.-M."/>
            <person name="Raoult D."/>
        </authorList>
    </citation>
    <scope>NUCLEOTIDE SEQUENCE [LARGE SCALE GENOMIC DNA]</scope>
    <source>
        <strain>ATCC VR-1525 / URRWXCal2</strain>
    </source>
</reference>
<gene>
    <name evidence="1" type="primary">acpS</name>
    <name type="ordered locus">RF_0943</name>
</gene>
<proteinExistence type="inferred from homology"/>
<evidence type="ECO:0000255" key="1">
    <source>
        <dbReference type="HAMAP-Rule" id="MF_00101"/>
    </source>
</evidence>
<sequence>MFIGVGTDIVQIPRIEKILHLYPELFAKKILTSKELAQFSLLDKTGHAVFLAKRFAAKEAVSKAFGVGIGQGINLKDITILNDNLGKPIVEVSSNYTKKLPPFNIHLSLSDDYPVCVAFAVIESSCNVISR</sequence>